<protein>
    <recommendedName>
        <fullName>Protein lin-14</fullName>
    </recommendedName>
    <alternativeName>
        <fullName>Abnormal cell lineage protein 14</fullName>
    </alternativeName>
</protein>
<name>LIN14_CAEEL</name>
<keyword id="KW-0025">Alternative splicing</keyword>
<keyword id="KW-0217">Developmental protein</keyword>
<keyword id="KW-0238">DNA-binding</keyword>
<keyword id="KW-0539">Nucleus</keyword>
<keyword id="KW-1185">Reference proteome</keyword>
<keyword id="KW-0804">Transcription</keyword>
<keyword id="KW-0805">Transcription regulation</keyword>
<organism>
    <name type="scientific">Caenorhabditis elegans</name>
    <dbReference type="NCBI Taxonomy" id="6239"/>
    <lineage>
        <taxon>Eukaryota</taxon>
        <taxon>Metazoa</taxon>
        <taxon>Ecdysozoa</taxon>
        <taxon>Nematoda</taxon>
        <taxon>Chromadorea</taxon>
        <taxon>Rhabditida</taxon>
        <taxon>Rhabditina</taxon>
        <taxon>Rhabditomorpha</taxon>
        <taxon>Rhabditoidea</taxon>
        <taxon>Rhabditidae</taxon>
        <taxon>Peloderinae</taxon>
        <taxon>Caenorhabditis</taxon>
    </lineage>
</organism>
<accession>Q21446</accession>
<accession>Q21447</accession>
<accession>Q22775</accession>
<accession>Q27292</accession>
<proteinExistence type="evidence at protein level"/>
<dbReference type="EMBL" id="X60231">
    <property type="protein sequence ID" value="CAA42791.1"/>
    <property type="molecule type" value="Genomic_DNA"/>
</dbReference>
<dbReference type="EMBL" id="X60232">
    <property type="protein sequence ID" value="CAA42791.1"/>
    <property type="status" value="JOINED"/>
    <property type="molecule type" value="Genomic_DNA"/>
</dbReference>
<dbReference type="EMBL" id="X60233">
    <property type="protein sequence ID" value="CAA42791.1"/>
    <property type="status" value="JOINED"/>
    <property type="molecule type" value="Genomic_DNA"/>
</dbReference>
<dbReference type="EMBL" id="X60232">
    <property type="protein sequence ID" value="CAA42792.1"/>
    <property type="molecule type" value="Genomic_DNA"/>
</dbReference>
<dbReference type="EMBL" id="X60233">
    <property type="protein sequence ID" value="CAA42792.1"/>
    <property type="status" value="JOINED"/>
    <property type="molecule type" value="Genomic_DNA"/>
</dbReference>
<dbReference type="EMBL" id="X60233">
    <property type="protein sequence ID" value="CAA42793.1"/>
    <property type="molecule type" value="Genomic_DNA"/>
</dbReference>
<dbReference type="EMBL" id="BX284606">
    <property type="protein sequence ID" value="CAA91484.2"/>
    <property type="molecule type" value="Genomic_DNA"/>
</dbReference>
<dbReference type="EMBL" id="BX284606">
    <property type="protein sequence ID" value="CAA91485.1"/>
    <property type="molecule type" value="Genomic_DNA"/>
</dbReference>
<dbReference type="PIR" id="A40581">
    <property type="entry name" value="A40581"/>
</dbReference>
<dbReference type="PIR" id="B89648">
    <property type="entry name" value="B89648"/>
</dbReference>
<dbReference type="PIR" id="T25268">
    <property type="entry name" value="T25268"/>
</dbReference>
<dbReference type="RefSeq" id="NP_509916.2">
    <molecule id="Q21446-1"/>
    <property type="nucleotide sequence ID" value="NM_077515.5"/>
</dbReference>
<dbReference type="RefSeq" id="NP_509917.1">
    <molecule id="Q21446-2"/>
    <property type="nucleotide sequence ID" value="NM_077516.7"/>
</dbReference>
<dbReference type="SMR" id="Q21446"/>
<dbReference type="BioGRID" id="46246">
    <property type="interactions" value="4"/>
</dbReference>
<dbReference type="FunCoup" id="Q21446">
    <property type="interactions" value="381"/>
</dbReference>
<dbReference type="STRING" id="6239.T25C12.1a.1"/>
<dbReference type="iPTMnet" id="Q21446"/>
<dbReference type="PaxDb" id="6239-T25C12.1a"/>
<dbReference type="PeptideAtlas" id="Q21446"/>
<dbReference type="EnsemblMetazoa" id="T25C12.1a.1">
    <molecule id="Q21446-1"/>
    <property type="protein sequence ID" value="T25C12.1a.1"/>
    <property type="gene ID" value="WBGene00003003"/>
</dbReference>
<dbReference type="EnsemblMetazoa" id="T25C12.1b.1">
    <molecule id="Q21446-2"/>
    <property type="protein sequence ID" value="T25C12.1b.1"/>
    <property type="gene ID" value="WBGene00003003"/>
</dbReference>
<dbReference type="GeneID" id="181337"/>
<dbReference type="KEGG" id="cel:CELE_T25C12.1"/>
<dbReference type="UCSC" id="T25C12.1a">
    <molecule id="Q21446-1"/>
    <property type="organism name" value="c. elegans"/>
</dbReference>
<dbReference type="AGR" id="WB:WBGene00003003"/>
<dbReference type="CTD" id="181337"/>
<dbReference type="WormBase" id="T25C12.1a">
    <molecule id="Q21446-1"/>
    <property type="protein sequence ID" value="CE43285"/>
    <property type="gene ID" value="WBGene00003003"/>
    <property type="gene designation" value="lin-14"/>
</dbReference>
<dbReference type="WormBase" id="T25C12.1b">
    <molecule id="Q21446-2"/>
    <property type="protein sequence ID" value="CE03734"/>
    <property type="gene ID" value="WBGene00003003"/>
    <property type="gene designation" value="lin-14"/>
</dbReference>
<dbReference type="eggNOG" id="ENOG502S18Y">
    <property type="taxonomic scope" value="Eukaryota"/>
</dbReference>
<dbReference type="HOGENOM" id="CLU_520958_0_0_1"/>
<dbReference type="InParanoid" id="Q21446"/>
<dbReference type="OMA" id="PIFPFPQ"/>
<dbReference type="OrthoDB" id="5871770at2759"/>
<dbReference type="PRO" id="PR:Q21446"/>
<dbReference type="Proteomes" id="UP000001940">
    <property type="component" value="Chromosome X"/>
</dbReference>
<dbReference type="Bgee" id="WBGene00003003">
    <property type="expression patterns" value="Expressed in pharyngeal muscle cell (C elegans) and 3 other cell types or tissues"/>
</dbReference>
<dbReference type="GO" id="GO:0000794">
    <property type="term" value="C:condensed nuclear chromosome"/>
    <property type="evidence" value="ECO:0000314"/>
    <property type="project" value="WormBase"/>
</dbReference>
<dbReference type="GO" id="GO:0005634">
    <property type="term" value="C:nucleus"/>
    <property type="evidence" value="ECO:0000314"/>
    <property type="project" value="WormBase"/>
</dbReference>
<dbReference type="GO" id="GO:0003690">
    <property type="term" value="F:double-stranded DNA binding"/>
    <property type="evidence" value="ECO:0000314"/>
    <property type="project" value="WormBase"/>
</dbReference>
<dbReference type="GO" id="GO:0000977">
    <property type="term" value="F:RNA polymerase II transcription regulatory region sequence-specific DNA binding"/>
    <property type="evidence" value="ECO:0000314"/>
    <property type="project" value="WormBase"/>
</dbReference>
<dbReference type="GO" id="GO:0003697">
    <property type="term" value="F:single-stranded DNA binding"/>
    <property type="evidence" value="ECO:0000314"/>
    <property type="project" value="WormBase"/>
</dbReference>
<dbReference type="GO" id="GO:0000122">
    <property type="term" value="P:negative regulation of transcription by RNA polymerase II"/>
    <property type="evidence" value="ECO:0000315"/>
    <property type="project" value="WormBase"/>
</dbReference>
<dbReference type="GO" id="GO:0048666">
    <property type="term" value="P:neuron development"/>
    <property type="evidence" value="ECO:0000315"/>
    <property type="project" value="WormBase"/>
</dbReference>
<dbReference type="GO" id="GO:0042659">
    <property type="term" value="P:regulation of cell fate specification"/>
    <property type="evidence" value="ECO:0000316"/>
    <property type="project" value="UniProtKB"/>
</dbReference>
<dbReference type="GO" id="GO:0040034">
    <property type="term" value="P:regulation of development, heterochronic"/>
    <property type="evidence" value="ECO:0000316"/>
    <property type="project" value="UniProtKB"/>
</dbReference>
<dbReference type="GO" id="GO:0090444">
    <property type="term" value="P:regulation of nematode larval development, heterochronic"/>
    <property type="evidence" value="ECO:0000315"/>
    <property type="project" value="WormBase"/>
</dbReference>
<evidence type="ECO:0000256" key="1">
    <source>
        <dbReference type="SAM" id="MobiDB-lite"/>
    </source>
</evidence>
<evidence type="ECO:0000269" key="2">
    <source>
    </source>
</evidence>
<evidence type="ECO:0000269" key="3">
    <source>
    </source>
</evidence>
<evidence type="ECO:0000269" key="4">
    <source>
    </source>
</evidence>
<evidence type="ECO:0000269" key="5">
    <source>
    </source>
</evidence>
<evidence type="ECO:0000269" key="6">
    <source>
    </source>
</evidence>
<evidence type="ECO:0000269" key="7">
    <source>
    </source>
</evidence>
<evidence type="ECO:0000269" key="8">
    <source>
    </source>
</evidence>
<evidence type="ECO:0000269" key="9">
    <source>
    </source>
</evidence>
<evidence type="ECO:0000269" key="10">
    <source>
    </source>
</evidence>
<evidence type="ECO:0000269" key="11">
    <source>
    </source>
</evidence>
<evidence type="ECO:0000269" key="12">
    <source>
    </source>
</evidence>
<evidence type="ECO:0000269" key="13">
    <source>
    </source>
</evidence>
<evidence type="ECO:0000303" key="14">
    <source>
    </source>
</evidence>
<evidence type="ECO:0000305" key="15"/>
<evidence type="ECO:0000312" key="16">
    <source>
        <dbReference type="WormBase" id="T25C12.1a"/>
    </source>
</evidence>
<evidence type="ECO:0000312" key="17">
    <source>
        <dbReference type="WormBase" id="T25C12.1b"/>
    </source>
</evidence>
<feature type="chain" id="PRO_0000084425" description="Protein lin-14">
    <location>
        <begin position="1"/>
        <end position="539"/>
    </location>
</feature>
<feature type="region of interest" description="Disordered" evidence="1">
    <location>
        <begin position="162"/>
        <end position="230"/>
    </location>
</feature>
<feature type="region of interest" description="Disordered" evidence="1">
    <location>
        <begin position="262"/>
        <end position="293"/>
    </location>
</feature>
<feature type="region of interest" description="Involved in sequence-specific DNA-binding" evidence="3 13">
    <location>
        <begin position="296"/>
        <end position="440"/>
    </location>
</feature>
<feature type="compositionally biased region" description="Polar residues" evidence="1">
    <location>
        <begin position="163"/>
        <end position="183"/>
    </location>
</feature>
<feature type="compositionally biased region" description="Polar residues" evidence="1">
    <location>
        <begin position="193"/>
        <end position="214"/>
    </location>
</feature>
<feature type="compositionally biased region" description="Low complexity" evidence="1">
    <location>
        <begin position="274"/>
        <end position="284"/>
    </location>
</feature>
<feature type="splice variant" id="VSP_004306" description="In isoform b." evidence="15">
    <original>MGKGQPKEPKIEQSVVDLCKRTVAMNLLQCYPTTTVDEMNCEEWGNGTESTQSVAACQGCIELR</original>
    <variation>MDLPGTSSNDFVQPFSTFYPSPTSPPMHQAALLPALTALYPQLLQLPHLKSDYLIRSDMSAF</variation>
    <location>
        <begin position="1"/>
        <end position="64"/>
    </location>
</feature>
<feature type="mutagenesis site" description="In n179; precocious onset of tail tip retraction resulting in over-retracted and shortened adult male tails (also known as the Ore phenotype). Premature alae formation at the L3 larval stage. Premature alae formation is partially suppressed in a sea-2 bp283 mutant background. Enhances the precocious development, semi-dumpy, vulval protrusions and egg-laying defects in a dcap-1 tm3163 mutant background at 25 degrees Celsius. Partially suppresses the enhanced dauer phenotype of dcap-1 tm3163 mutants at 25 degrees Celsius. Abolishes expression of the immunoglobulin domain gene zig-4 in the interneuron PVT during the L1 larval stage." evidence="2 8 10 11">
    <original>R</original>
    <variation>G</variation>
    <location>
        <position position="303"/>
    </location>
</feature>
<feature type="mutagenesis site" description="In n838; decrease in protein levels." evidence="5">
    <original>A</original>
    <variation>T</variation>
    <location>
        <position position="322"/>
    </location>
</feature>
<feature type="mutagenesis site" description="In sa485; alteration of vulval-gonadal synchrony." evidence="4">
    <original>G</original>
    <variation>D</variation>
    <location>
        <position position="381"/>
    </location>
</feature>
<feature type="mutagenesis site" description="In syb5772; abolishes binding to nlp-45 promoter DNA sequence in vitro and causes sterility, dumpy appearance, protruding vulva, precocious alae, and derepression of nlp-45 gene expression at an improper time during the larval L1 stage; when associated with A-432; A-433 and A-435." evidence="13">
    <original>R</original>
    <variation>A</variation>
    <location>
        <position position="430"/>
    </location>
</feature>
<feature type="mutagenesis site" description="In syb5772; abolishes binding to nlp-45 promoter DNA sequence in vitro and causes sterility, dumpy appearance, protruding vulva, precocious alae, and derepression of nlp-45 gene expression at an improper time during the larval L1 stage; when associated with A-430; A-433 and A-435." evidence="13">
    <original>R</original>
    <variation>A</variation>
    <location>
        <position position="432"/>
    </location>
</feature>
<feature type="mutagenesis site" description="In syb5772; abolishes binding to nlp-45 promoter DNA sequence in vitro and causes sterility, dumpy appearance, protruding vulva, precocious alae, and derepression of nlp-45 gene expression at an improper time during the larval L1 stage; when associated with A-430; A-432 and A-435." evidence="13">
    <original>R</original>
    <variation>A</variation>
    <location>
        <position position="433"/>
    </location>
</feature>
<feature type="mutagenesis site" description="In syb5772; abolishes binding to nlp-45 promoter DNA sequence in vitro and causes sterility, dumpy appearance, protruding vulva, precocious alae, and derepression of nlp-45 gene expression at an improper time during the larval L1 stage; when associated with A-430; A-432 and A-433." evidence="13">
    <original>R</original>
    <variation>A</variation>
    <location>
        <position position="435"/>
    </location>
</feature>
<feature type="sequence conflict" description="In Ref. 1; CAA42792." evidence="15" ref="1">
    <location>
        <begin position="1"/>
        <end position="24"/>
    </location>
</feature>
<gene>
    <name evidence="16" type="primary">lin-14</name>
    <name evidence="16" type="ORF">T25C12.1</name>
</gene>
<reference key="1">
    <citation type="journal article" date="1991" name="Genes Dev.">
        <title>Negative regulatory sequences in the lin-14 3'-untranslated region are necessary to generate a temporal switch during Caenorhabditis elegans development.</title>
        <authorList>
            <person name="Wightman B."/>
            <person name="Buerglin T.R."/>
            <person name="Gatto J."/>
            <person name="Arasu P."/>
            <person name="Ruvkun G."/>
        </authorList>
    </citation>
    <scope>NUCLEOTIDE SEQUENCE [GENOMIC DNA]</scope>
    <scope>FUNCTION</scope>
    <scope>SUBCELLULAR LOCATION</scope>
    <scope>ALTERNATIVE SPLICING (ISOFORMS A AND B)</scope>
    <scope>MUTAGENESIS OF ALA-322</scope>
    <source>
        <strain>Bristol N2</strain>
    </source>
</reference>
<reference key="2">
    <citation type="journal article" date="1998" name="Science">
        <title>Genome sequence of the nematode C. elegans: a platform for investigating biology.</title>
        <authorList>
            <consortium name="The C. elegans sequencing consortium"/>
        </authorList>
    </citation>
    <scope>NUCLEOTIDE SEQUENCE [LARGE SCALE GENOMIC DNA]</scope>
    <source>
        <strain>Bristol N2</strain>
    </source>
</reference>
<reference key="3">
    <citation type="journal article" date="1991" name="Genes Dev.">
        <title>Temporal regulation of lin-14 by the antagonistic action of two other heterochronic genes, lin-4 and lin-28.</title>
        <authorList>
            <person name="Arasu P."/>
            <person name="Wightman B."/>
            <person name="Ruvkun G."/>
        </authorList>
    </citation>
    <scope>FUNCTION</scope>
    <scope>SUBCELLULAR LOCATION</scope>
    <scope>TISSUE SPECIFICITY</scope>
    <source>
        <strain>Bristol N2</strain>
    </source>
</reference>
<reference key="4">
    <citation type="journal article" date="2003" name="Development">
        <title>Identification of spatial and temporal cues that regulate postembryonic expression of axon maintenance factors in the C. elegans ventral nerve cord.</title>
        <authorList>
            <person name="Aurelio O."/>
            <person name="Boulin T."/>
            <person name="Hobert O."/>
        </authorList>
    </citation>
    <scope>FUNCTION</scope>
    <scope>MUTAGENESIS OF ARG-303</scope>
</reference>
<reference key="5">
    <citation type="journal article" date="2005" name="Mol. Cell. Biol.">
        <title>The Caenorhabditis elegans heterochronic regulator LIN-14 is a novel transcription factor that controls the developmental timing of transcription from the insulin/insulin-like growth factor gene ins-33 by direct DNA binding.</title>
        <authorList>
            <person name="Hristova M."/>
            <person name="Birse D."/>
            <person name="Hong Y."/>
            <person name="Ambros V."/>
        </authorList>
    </citation>
    <scope>FUNCTION</scope>
    <scope>SUBCELLULAR LOCATION</scope>
    <source>
        <strain>Bristol N2</strain>
    </source>
</reference>
<reference key="6">
    <citation type="journal article" date="2009" name="Dev. Dyn.">
        <title>The Caenorhabditis elegans heterochronic gene lin-14 coordinates temporal progression and maturation in the egg-laying system.</title>
        <authorList>
            <person name="Johnson R.W."/>
            <person name="Liu L.Y."/>
            <person name="Hanna-Rose W."/>
            <person name="Chamberlin H.M."/>
        </authorList>
    </citation>
    <scope>FUNCTION</scope>
    <scope>SUBCELLULAR LOCATION</scope>
    <scope>DISRUPTION PHENOTYPE</scope>
    <scope>MUTAGENESIS OF GLY-381</scope>
    <source>
        <strain>Bristol N2</strain>
    </source>
</reference>
<reference key="7">
    <citation type="journal article" date="2010" name="Curr. Biol.">
        <title>LIN-14 inhibition of LIN-12 contributes to precision and timing of C. elegans vulval fate patterning.</title>
        <authorList>
            <person name="Li J."/>
            <person name="Greenwald I."/>
        </authorList>
    </citation>
    <scope>FUNCTION</scope>
    <source>
        <strain>Bristol N2</strain>
    </source>
</reference>
<reference key="8">
    <citation type="journal article" date="2011" name="Development">
        <title>The zinc-finger protein SEA-2 regulates larval developmental timing and adult lifespan in C. elegans.</title>
        <authorList>
            <person name="Huang X."/>
            <person name="Zhang H."/>
            <person name="Zhang H."/>
        </authorList>
    </citation>
    <scope>FUNCTION</scope>
    <scope>MUTAGENESIS OF ARG-303</scope>
</reference>
<reference key="9">
    <citation type="journal article" date="2014" name="Elife">
        <title>CED-3 caspase acts with miRNAs to regulate non-apoptotic gene expression dynamics for robust development in C. elegans.</title>
        <authorList>
            <person name="Weaver B.P."/>
            <person name="Zabinsky R."/>
            <person name="Weaver Y.M."/>
            <person name="Lee E.S."/>
            <person name="Xue D."/>
            <person name="Han M."/>
        </authorList>
    </citation>
    <scope>PROTEOLYTIC CLEAVAGE</scope>
    <scope>DISRUPTION PHENOTYPE</scope>
</reference>
<reference key="10">
    <citation type="journal article" date="2016" name="Development">
        <title>Makorin ortholog LEP-2 regulates LIN-28 stability to promote the juvenile-to-adult transition in Caenorhabditis elegans.</title>
        <authorList>
            <person name="Herrera R.A."/>
            <person name="Kiontke K."/>
            <person name="Fitch D.H."/>
        </authorList>
    </citation>
    <scope>FUNCTION</scope>
    <scope>DISRUPTION PHENOTYPE</scope>
    <scope>MUTAGENESIS OF ARG-303</scope>
</reference>
<reference key="11">
    <citation type="journal article" date="2017" name="Open Biol.">
        <title>Neuronal function of the mRNA decapping complex determines survival of Caenorhabditis elegans at high temperature through temporal regulation of heterochronic gene expression.</title>
        <authorList>
            <person name="Borbolis F."/>
            <person name="Flessa C.M."/>
            <person name="Roumelioti F."/>
            <person name="Diallinas G."/>
            <person name="Stravopodis D.J."/>
            <person name="Syntichaki P."/>
        </authorList>
    </citation>
    <scope>FUNCTION</scope>
    <scope>DISRUPTION PHENOTYPE</scope>
    <scope>MUTAGENESIS OF ARG-303</scope>
</reference>
<reference key="12">
    <citation type="journal article" date="2019" name="Dev. Cell">
        <title>The Long Non-Coding RNA lep-5 Promotes the Juvenile-to-Adult Transition by Destabilizing LIN-28.</title>
        <authorList>
            <person name="Kiontke K.C."/>
            <person name="Herrera R.A."/>
            <person name="Vuong E."/>
            <person name="Luo J."/>
            <person name="Schwarz E.M."/>
            <person name="Fitch D.H.A."/>
            <person name="Portman D.S."/>
        </authorList>
    </citation>
    <scope>FUNCTION</scope>
    <scope>DISRUPTION PHENOTYPE</scope>
</reference>
<reference key="13">
    <citation type="journal article" date="2023" name="Curr. Biol.">
        <title>The heterochronic LIN-14 protein is a BEN domain transcription factor.</title>
        <authorList>
            <person name="Greene S."/>
            <person name="Huang J."/>
            <person name="Hamilton K."/>
            <person name="Tong L."/>
            <person name="Hobert O."/>
            <person name="Sun H."/>
        </authorList>
    </citation>
    <scope>FUNCTION</scope>
    <scope>DOMAIN</scope>
    <scope>MUTAGENESIS OF ARG-430; ARG-432; ARG-433 AND ARG-435</scope>
</reference>
<sequence length="539" mass="59343">MGKGQPKEPKIEQSVVDLCKRTVAMNLLQCYPTTTVDEMNCEEWGNGTESTQSVAACQGCIELRKEVTDLRQAVNLILPMLPLYPTIGNGFNATGLAAQPTLQHVIQQSLLRKRPVAQTPTVPQPECPGQIRPVLSSPAAALQNVIMLNPWIMGSSLKPASPTLPNGQIPTTIGETSLQGTDDQTVKWIGPSSVDSNGQKTDSSAASAGDNQNIDVIGDGSESPTSSNHSAQEIALMTSQQTFLNALKDSSFLFTNPVPTVETAPPLRVAPPINGTTNGTAKAGGPERKPRKPVNDDIVKIVRNQDLSEENISMFEIPVPKAIASDPTFRPVSEQQIIQQIIQGKKYEEMEVGECMIQLCKKLAEKRVFGPRLMSQTTVAGLNHSNYANLPIKGICYIQHVCRKVLYDKFENEEDFWDKFREAMRKLAARCRRVRHAKKTKHNREEAQAEMLSKRYGEDMPFNLNGAGLIRPKVETVSPEANILNSDQIKSQLESLFAHIPKTESETPLIEIIQQNISLFTHLIRTKVESQSPPLQGPQ</sequence>
<comment type="function">
    <text evidence="2 3 4 6 7 8 10 11 12">Heterochronic protein which controls the choice of stage specific cell fates. Involved in the temporal progression of vulval fate patterning, possibly by inhibiting lin-12. Acts as a transcription factor involved in the stage-specific repression of various genes, including insulin/insulin-like growth factor gene ins-33 and neuropeptide-encoding gene nlp-45 (PubMed:16314527, PubMed:36977380). Binds to the consensus sequence 5'-[CT]GGA[AG]-3' in the regulatory elements of target genes (PubMed:16314527, PubMed:36977380). Plays a role in governing the developmental timing of male tail tip morphogenesis (PubMed:26811380, PubMed:30956008). Plays a role in controlling the timing of seam cell development during the larval stages (PubMed:21471153). Plays a role in promoting survival at high temperatures in larvae (PubMed:28250105). Involved in maintenance of the architecture of the ventral nerve cord, perhaps acting via modulating expression of the immunoglobulin domain gene zig-4.</text>
</comment>
<comment type="function">
    <molecule>Isoform a</molecule>
    <text evidence="5">May specify L2 and later cell fates, creating a temporal switch.</text>
</comment>
<comment type="function">
    <molecule>Isoform b</molecule>
    <text evidence="5">May be involved in specifying L1 cell fates.</text>
</comment>
<comment type="subcellular location">
    <subcellularLocation>
        <location evidence="3 4 5 6">Nucleus</location>
    </subcellularLocation>
    <text>May associate with mitotic chromosomes.</text>
</comment>
<comment type="alternative products">
    <event type="alternative splicing"/>
    <isoform>
        <id>Q21446-1</id>
        <name evidence="16">a</name>
        <name evidence="14">B1</name>
        <sequence type="displayed"/>
    </isoform>
    <isoform>
        <id>Q21446-2</id>
        <name evidence="17">b</name>
        <name evidence="14">A</name>
        <sequence type="described" ref="VSP_004306"/>
    </isoform>
</comment>
<comment type="tissue specificity">
    <text evidence="6">High levels in hypodermal, intestinal, body wall muscle, nerve ring, and ventral nerve cord cells of embryos and L1 animals.</text>
</comment>
<comment type="developmental stage">
    <text>Present at high levels in embryos and L1 animals but is undetectable at later stages.</text>
</comment>
<comment type="domain">
    <text evidence="13">Despite no sequence similarity in conventional searches, based on an AlphaFold predicted structure, the sequence-specific DNA-binding region exhibits structural homology to known BEN domains, for example in human BEND3 and fruit-fly protein insensitive insv.</text>
</comment>
<comment type="PTM">
    <text evidence="9">Cleaved by caspase ced-3 in vitro.</text>
</comment>
<comment type="disruption phenotype">
    <text evidence="4 9 10 11 12">Asynchrony between gonadal and vulval development. Retarded uterine uv1 cell differentiation (PubMed:19161245). RNAi-mediated knockdown results in the precocious onset of tail tip retraction resulting in over-retracted and shortened adult male tails (also known as the Ore phenotype) (PubMed:26811380, PubMed:30956008). RNAi-mediated knockdown in a ced-3 and ain-1 double mutant background reduces the percentage of animals with developmental defects including impaired egg-laying and production of ectopic seam cells (PubMed:25432023). RNAi-mediated knockdown reduced the number of dauer animals in a dcap-1 mutant background (PubMed:28250105).</text>
</comment>